<dbReference type="EMBL" id="CP000151">
    <property type="protein sequence ID" value="ABB07845.1"/>
    <property type="molecule type" value="Genomic_DNA"/>
</dbReference>
<dbReference type="RefSeq" id="WP_011351416.1">
    <property type="nucleotide sequence ID" value="NZ_WNDV01000026.1"/>
</dbReference>
<dbReference type="SMR" id="Q39I71"/>
<dbReference type="GeneID" id="93192617"/>
<dbReference type="KEGG" id="bur:Bcep18194_A4248"/>
<dbReference type="HOGENOM" id="CLU_066645_0_0_4"/>
<dbReference type="Proteomes" id="UP000002705">
    <property type="component" value="Chromosome 1"/>
</dbReference>
<dbReference type="GO" id="GO:0043590">
    <property type="term" value="C:bacterial nucleoid"/>
    <property type="evidence" value="ECO:0007669"/>
    <property type="project" value="TreeGrafter"/>
</dbReference>
<dbReference type="GO" id="GO:0006310">
    <property type="term" value="P:DNA recombination"/>
    <property type="evidence" value="ECO:0007669"/>
    <property type="project" value="UniProtKB-UniRule"/>
</dbReference>
<dbReference type="GO" id="GO:0006302">
    <property type="term" value="P:double-strand break repair"/>
    <property type="evidence" value="ECO:0007669"/>
    <property type="project" value="TreeGrafter"/>
</dbReference>
<dbReference type="Gene3D" id="2.40.50.140">
    <property type="entry name" value="Nucleic acid-binding proteins"/>
    <property type="match status" value="1"/>
</dbReference>
<dbReference type="Gene3D" id="1.20.1440.120">
    <property type="entry name" value="Recombination protein O, C-terminal domain"/>
    <property type="match status" value="1"/>
</dbReference>
<dbReference type="HAMAP" id="MF_00201">
    <property type="entry name" value="RecO"/>
    <property type="match status" value="1"/>
</dbReference>
<dbReference type="InterPro" id="IPR037278">
    <property type="entry name" value="ARFGAP/RecO"/>
</dbReference>
<dbReference type="InterPro" id="IPR022572">
    <property type="entry name" value="DNA_rep/recomb_RecO_N"/>
</dbReference>
<dbReference type="InterPro" id="IPR012340">
    <property type="entry name" value="NA-bd_OB-fold"/>
</dbReference>
<dbReference type="InterPro" id="IPR003717">
    <property type="entry name" value="RecO"/>
</dbReference>
<dbReference type="InterPro" id="IPR042242">
    <property type="entry name" value="RecO_C"/>
</dbReference>
<dbReference type="NCBIfam" id="TIGR00613">
    <property type="entry name" value="reco"/>
    <property type="match status" value="1"/>
</dbReference>
<dbReference type="PANTHER" id="PTHR33991">
    <property type="entry name" value="DNA REPAIR PROTEIN RECO"/>
    <property type="match status" value="1"/>
</dbReference>
<dbReference type="PANTHER" id="PTHR33991:SF1">
    <property type="entry name" value="DNA REPAIR PROTEIN RECO"/>
    <property type="match status" value="1"/>
</dbReference>
<dbReference type="Pfam" id="PF02565">
    <property type="entry name" value="RecO_C"/>
    <property type="match status" value="1"/>
</dbReference>
<dbReference type="Pfam" id="PF11967">
    <property type="entry name" value="RecO_N"/>
    <property type="match status" value="1"/>
</dbReference>
<dbReference type="SUPFAM" id="SSF57863">
    <property type="entry name" value="ArfGap/RecO-like zinc finger"/>
    <property type="match status" value="1"/>
</dbReference>
<dbReference type="SUPFAM" id="SSF50249">
    <property type="entry name" value="Nucleic acid-binding proteins"/>
    <property type="match status" value="1"/>
</dbReference>
<comment type="function">
    <text evidence="1">Involved in DNA repair and RecF pathway recombination.</text>
</comment>
<comment type="similarity">
    <text evidence="1">Belongs to the RecO family.</text>
</comment>
<accession>Q39I71</accession>
<sequence length="278" mass="30911">MGTNDALTSTEDAVTAGANDAPLPAPPEPPRKARRATSRTSDFRVAEQPAYVLHSYPYRETSLIIDVLTRDHGRLALVAKGAKRPHSALRGVLQTFQPLLLSWSGKSEVRTLTGAEWVGGMLPLGGDGLLCGFYANELLVKFCAREDPQPPLFNHYVLTLTRLAHGEPAVQVLRSFERVLLRETGYAMALNRTVARRAVEPDRRYVFDPERGVRNADDEVPSHWPVISGQTLLDMEQDDYHRAQTVAQSKTLMRFLLNTYLGGTPLATRQILIDLQNL</sequence>
<gene>
    <name evidence="1" type="primary">recO</name>
    <name type="ordered locus">Bcep18194_A4248</name>
</gene>
<name>RECO_BURL3</name>
<proteinExistence type="inferred from homology"/>
<keyword id="KW-0227">DNA damage</keyword>
<keyword id="KW-0233">DNA recombination</keyword>
<keyword id="KW-0234">DNA repair</keyword>
<protein>
    <recommendedName>
        <fullName evidence="1">DNA repair protein RecO</fullName>
    </recommendedName>
    <alternativeName>
        <fullName evidence="1">Recombination protein O</fullName>
    </alternativeName>
</protein>
<feature type="chain" id="PRO_0000264808" description="DNA repair protein RecO">
    <location>
        <begin position="1"/>
        <end position="278"/>
    </location>
</feature>
<feature type="region of interest" description="Disordered" evidence="2">
    <location>
        <begin position="1"/>
        <end position="42"/>
    </location>
</feature>
<feature type="compositionally biased region" description="Polar residues" evidence="2">
    <location>
        <begin position="1"/>
        <end position="12"/>
    </location>
</feature>
<evidence type="ECO:0000255" key="1">
    <source>
        <dbReference type="HAMAP-Rule" id="MF_00201"/>
    </source>
</evidence>
<evidence type="ECO:0000256" key="2">
    <source>
        <dbReference type="SAM" id="MobiDB-lite"/>
    </source>
</evidence>
<reference key="1">
    <citation type="submission" date="2005-10" db="EMBL/GenBank/DDBJ databases">
        <title>Complete sequence of chromosome 1 of Burkholderia sp. 383.</title>
        <authorList>
            <consortium name="US DOE Joint Genome Institute"/>
            <person name="Copeland A."/>
            <person name="Lucas S."/>
            <person name="Lapidus A."/>
            <person name="Barry K."/>
            <person name="Detter J.C."/>
            <person name="Glavina T."/>
            <person name="Hammon N."/>
            <person name="Israni S."/>
            <person name="Pitluck S."/>
            <person name="Chain P."/>
            <person name="Malfatti S."/>
            <person name="Shin M."/>
            <person name="Vergez L."/>
            <person name="Schmutz J."/>
            <person name="Larimer F."/>
            <person name="Land M."/>
            <person name="Kyrpides N."/>
            <person name="Lykidis A."/>
            <person name="Richardson P."/>
        </authorList>
    </citation>
    <scope>NUCLEOTIDE SEQUENCE [LARGE SCALE GENOMIC DNA]</scope>
    <source>
        <strain>ATCC 17760 / DSM 23089 / LMG 22485 / NCIMB 9086 / R18194 / 383</strain>
    </source>
</reference>
<organism>
    <name type="scientific">Burkholderia lata (strain ATCC 17760 / DSM 23089 / LMG 22485 / NCIMB 9086 / R18194 / 383)</name>
    <dbReference type="NCBI Taxonomy" id="482957"/>
    <lineage>
        <taxon>Bacteria</taxon>
        <taxon>Pseudomonadati</taxon>
        <taxon>Pseudomonadota</taxon>
        <taxon>Betaproteobacteria</taxon>
        <taxon>Burkholderiales</taxon>
        <taxon>Burkholderiaceae</taxon>
        <taxon>Burkholderia</taxon>
        <taxon>Burkholderia cepacia complex</taxon>
    </lineage>
</organism>